<sequence>MLKHQIKITINAIKKIKKLLLKKKNFKLKLRIFITGGGCSGFQYGFELEKITKKNDISIIQSGIEIIIDPISIQYLLGGKIDYIENLEGSKFVISNPNAKRTCGCGLSFSI</sequence>
<keyword id="KW-0408">Iron</keyword>
<keyword id="KW-0411">Iron-sulfur</keyword>
<keyword id="KW-0479">Metal-binding</keyword>
<keyword id="KW-1185">Reference proteome</keyword>
<dbReference type="EMBL" id="CP000263">
    <property type="protein sequence ID" value="ABJ90610.1"/>
    <property type="molecule type" value="Genomic_DNA"/>
</dbReference>
<dbReference type="RefSeq" id="WP_011672529.1">
    <property type="nucleotide sequence ID" value="NC_008513.1"/>
</dbReference>
<dbReference type="SMR" id="Q057T9"/>
<dbReference type="STRING" id="372461.BCc_134"/>
<dbReference type="KEGG" id="bcc:BCc_134"/>
<dbReference type="eggNOG" id="COG0316">
    <property type="taxonomic scope" value="Bacteria"/>
</dbReference>
<dbReference type="HOGENOM" id="CLU_069054_5_3_6"/>
<dbReference type="OrthoDB" id="9801228at2"/>
<dbReference type="Proteomes" id="UP000000669">
    <property type="component" value="Chromosome"/>
</dbReference>
<dbReference type="GO" id="GO:0051537">
    <property type="term" value="F:2 iron, 2 sulfur cluster binding"/>
    <property type="evidence" value="ECO:0007669"/>
    <property type="project" value="TreeGrafter"/>
</dbReference>
<dbReference type="GO" id="GO:0051539">
    <property type="term" value="F:4 iron, 4 sulfur cluster binding"/>
    <property type="evidence" value="ECO:0007669"/>
    <property type="project" value="TreeGrafter"/>
</dbReference>
<dbReference type="GO" id="GO:0005506">
    <property type="term" value="F:iron ion binding"/>
    <property type="evidence" value="ECO:0007669"/>
    <property type="project" value="UniProtKB-UniRule"/>
</dbReference>
<dbReference type="GO" id="GO:0016226">
    <property type="term" value="P:iron-sulfur cluster assembly"/>
    <property type="evidence" value="ECO:0007669"/>
    <property type="project" value="UniProtKB-UniRule"/>
</dbReference>
<dbReference type="Gene3D" id="2.60.300.12">
    <property type="entry name" value="HesB-like domain"/>
    <property type="match status" value="1"/>
</dbReference>
<dbReference type="HAMAP" id="MF_01380">
    <property type="entry name" value="Fe_S_insert_ErpA"/>
    <property type="match status" value="1"/>
</dbReference>
<dbReference type="InterPro" id="IPR000361">
    <property type="entry name" value="FeS_biogenesis"/>
</dbReference>
<dbReference type="InterPro" id="IPR016092">
    <property type="entry name" value="FeS_cluster_insertion"/>
</dbReference>
<dbReference type="InterPro" id="IPR017870">
    <property type="entry name" value="FeS_cluster_insertion_CS"/>
</dbReference>
<dbReference type="InterPro" id="IPR023063">
    <property type="entry name" value="FeS_cluster_insertion_RrpA"/>
</dbReference>
<dbReference type="InterPro" id="IPR035903">
    <property type="entry name" value="HesB-like_dom_sf"/>
</dbReference>
<dbReference type="NCBIfam" id="TIGR00049">
    <property type="entry name" value="iron-sulfur cluster assembly accessory protein"/>
    <property type="match status" value="1"/>
</dbReference>
<dbReference type="NCBIfam" id="NF010147">
    <property type="entry name" value="PRK13623.1"/>
    <property type="match status" value="1"/>
</dbReference>
<dbReference type="PANTHER" id="PTHR43011">
    <property type="entry name" value="IRON-SULFUR CLUSTER ASSEMBLY 2 HOMOLOG, MITOCHONDRIAL"/>
    <property type="match status" value="1"/>
</dbReference>
<dbReference type="PANTHER" id="PTHR43011:SF1">
    <property type="entry name" value="IRON-SULFUR CLUSTER ASSEMBLY 2 HOMOLOG, MITOCHONDRIAL"/>
    <property type="match status" value="1"/>
</dbReference>
<dbReference type="Pfam" id="PF01521">
    <property type="entry name" value="Fe-S_biosyn"/>
    <property type="match status" value="1"/>
</dbReference>
<dbReference type="SUPFAM" id="SSF89360">
    <property type="entry name" value="HesB-like domain"/>
    <property type="match status" value="1"/>
</dbReference>
<dbReference type="PROSITE" id="PS01152">
    <property type="entry name" value="HESB"/>
    <property type="match status" value="1"/>
</dbReference>
<proteinExistence type="inferred from homology"/>
<reference key="1">
    <citation type="journal article" date="2006" name="Science">
        <title>A small microbial genome: the end of a long symbiotic relationship?</title>
        <authorList>
            <person name="Perez-Brocal V."/>
            <person name="Gil R."/>
            <person name="Ramos S."/>
            <person name="Lamelas A."/>
            <person name="Postigo M."/>
            <person name="Michelena J.M."/>
            <person name="Silva F.J."/>
            <person name="Moya A."/>
            <person name="Latorre A."/>
        </authorList>
    </citation>
    <scope>NUCLEOTIDE SEQUENCE [LARGE SCALE GENOMIC DNA]</scope>
    <source>
        <strain>Cc</strain>
    </source>
</reference>
<evidence type="ECO:0000255" key="1">
    <source>
        <dbReference type="HAMAP-Rule" id="MF_01380"/>
    </source>
</evidence>
<protein>
    <recommendedName>
        <fullName evidence="1">Iron-sulfur cluster insertion protein ErpA</fullName>
    </recommendedName>
</protein>
<accession>Q057T9</accession>
<feature type="chain" id="PRO_0000311453" description="Iron-sulfur cluster insertion protein ErpA">
    <location>
        <begin position="1"/>
        <end position="111"/>
    </location>
</feature>
<feature type="binding site" evidence="1">
    <location>
        <position position="39"/>
    </location>
    <ligand>
        <name>iron-sulfur cluster</name>
        <dbReference type="ChEBI" id="CHEBI:30408"/>
    </ligand>
</feature>
<feature type="binding site" evidence="1">
    <location>
        <position position="103"/>
    </location>
    <ligand>
        <name>iron-sulfur cluster</name>
        <dbReference type="ChEBI" id="CHEBI:30408"/>
    </ligand>
</feature>
<feature type="binding site" evidence="1">
    <location>
        <position position="105"/>
    </location>
    <ligand>
        <name>iron-sulfur cluster</name>
        <dbReference type="ChEBI" id="CHEBI:30408"/>
    </ligand>
</feature>
<organism>
    <name type="scientific">Buchnera aphidicola subsp. Cinara cedri (strain Cc)</name>
    <dbReference type="NCBI Taxonomy" id="372461"/>
    <lineage>
        <taxon>Bacteria</taxon>
        <taxon>Pseudomonadati</taxon>
        <taxon>Pseudomonadota</taxon>
        <taxon>Gammaproteobacteria</taxon>
        <taxon>Enterobacterales</taxon>
        <taxon>Erwiniaceae</taxon>
        <taxon>Buchnera</taxon>
    </lineage>
</organism>
<gene>
    <name evidence="1" type="primary">erpA</name>
    <name type="ordered locus">BCc_134</name>
</gene>
<comment type="function">
    <text evidence="1">Required for insertion of 4Fe-4S clusters for at least IspG.</text>
</comment>
<comment type="cofactor">
    <cofactor evidence="1">
        <name>iron-sulfur cluster</name>
        <dbReference type="ChEBI" id="CHEBI:30408"/>
    </cofactor>
    <text evidence="1">Binds 1 iron-sulfur cluster per subunit.</text>
</comment>
<comment type="subunit">
    <text evidence="1">Homodimer.</text>
</comment>
<comment type="similarity">
    <text evidence="1">Belongs to the HesB/IscA family.</text>
</comment>
<name>ERPA_BUCCC</name>